<feature type="chain" id="PRO_1000189483" description="Anti-adapter protein IraD">
    <location>
        <begin position="1"/>
        <end position="127"/>
    </location>
</feature>
<sequence>MMRQSLQAVLPEISGNKTSSLRKSVCSDLLTLFNSPHSALPSLLVSGMPEWQLHNQSDKHLQSWYCRQLRSALLFHEPRIAALQVNLKEAYCHTLAISLEIMLYHDDEPLTFDLVWQKGSWHRTMPQ</sequence>
<protein>
    <recommendedName>
        <fullName evidence="1">Anti-adapter protein IraD</fullName>
    </recommendedName>
</protein>
<dbReference type="EMBL" id="CP000970">
    <property type="protein sequence ID" value="ACB19077.1"/>
    <property type="molecule type" value="Genomic_DNA"/>
</dbReference>
<dbReference type="RefSeq" id="WP_000986218.1">
    <property type="nucleotide sequence ID" value="NC_010498.1"/>
</dbReference>
<dbReference type="SMR" id="B1LDR4"/>
<dbReference type="KEGG" id="ecm:EcSMS35_4855"/>
<dbReference type="HOGENOM" id="CLU_1977621_0_0_6"/>
<dbReference type="Proteomes" id="UP000007011">
    <property type="component" value="Chromosome"/>
</dbReference>
<dbReference type="GO" id="GO:0005737">
    <property type="term" value="C:cytoplasm"/>
    <property type="evidence" value="ECO:0007669"/>
    <property type="project" value="UniProtKB-SubCell"/>
</dbReference>
<dbReference type="GO" id="GO:0043856">
    <property type="term" value="F:anti-sigma factor antagonist activity"/>
    <property type="evidence" value="ECO:0007669"/>
    <property type="project" value="InterPro"/>
</dbReference>
<dbReference type="GO" id="GO:0034599">
    <property type="term" value="P:cellular response to oxidative stress"/>
    <property type="evidence" value="ECO:0007669"/>
    <property type="project" value="UniProtKB-UniRule"/>
</dbReference>
<dbReference type="GO" id="GO:0006974">
    <property type="term" value="P:DNA damage response"/>
    <property type="evidence" value="ECO:0007669"/>
    <property type="project" value="InterPro"/>
</dbReference>
<dbReference type="HAMAP" id="MF_02010">
    <property type="entry name" value="IraD"/>
    <property type="match status" value="1"/>
</dbReference>
<dbReference type="InterPro" id="IPR023776">
    <property type="entry name" value="Anti-adapt_IraD"/>
</dbReference>
<dbReference type="InterPro" id="IPR007048">
    <property type="entry name" value="IraD/Gp25-like"/>
</dbReference>
<dbReference type="NCBIfam" id="NF010726">
    <property type="entry name" value="PRK14128.1-1"/>
    <property type="match status" value="1"/>
</dbReference>
<dbReference type="NCBIfam" id="NF010728">
    <property type="entry name" value="PRK14128.1-3"/>
    <property type="match status" value="1"/>
</dbReference>
<dbReference type="Pfam" id="PF04965">
    <property type="entry name" value="GPW_gp25"/>
    <property type="match status" value="1"/>
</dbReference>
<dbReference type="SUPFAM" id="SSF160719">
    <property type="entry name" value="gpW/gp25-like"/>
    <property type="match status" value="1"/>
</dbReference>
<organism>
    <name type="scientific">Escherichia coli (strain SMS-3-5 / SECEC)</name>
    <dbReference type="NCBI Taxonomy" id="439855"/>
    <lineage>
        <taxon>Bacteria</taxon>
        <taxon>Pseudomonadati</taxon>
        <taxon>Pseudomonadota</taxon>
        <taxon>Gammaproteobacteria</taxon>
        <taxon>Enterobacterales</taxon>
        <taxon>Enterobacteriaceae</taxon>
        <taxon>Escherichia</taxon>
    </lineage>
</organism>
<accession>B1LDR4</accession>
<proteinExistence type="inferred from homology"/>
<keyword id="KW-0963">Cytoplasm</keyword>
<keyword id="KW-0346">Stress response</keyword>
<reference key="1">
    <citation type="journal article" date="2008" name="J. Bacteriol.">
        <title>Insights into the environmental resistance gene pool from the genome sequence of the multidrug-resistant environmental isolate Escherichia coli SMS-3-5.</title>
        <authorList>
            <person name="Fricke W.F."/>
            <person name="Wright M.S."/>
            <person name="Lindell A.H."/>
            <person name="Harkins D.M."/>
            <person name="Baker-Austin C."/>
            <person name="Ravel J."/>
            <person name="Stepanauskas R."/>
        </authorList>
    </citation>
    <scope>NUCLEOTIDE SEQUENCE [LARGE SCALE GENOMIC DNA]</scope>
    <source>
        <strain>SMS-3-5 / SECEC</strain>
    </source>
</reference>
<evidence type="ECO:0000255" key="1">
    <source>
        <dbReference type="HAMAP-Rule" id="MF_02010"/>
    </source>
</evidence>
<comment type="function">
    <text evidence="1">Inhibits RpoS proteolysis by regulating RssB activity, thereby increasing the stability of the sigma stress factor RpoS during oxidative stress. Its effect on RpoS stability is due to its interaction with RssB, which probably blocks the interaction of RssB with RpoS, and the consequent delivery of the RssB-RpoS complex to the ClpXP protein degradation pathway.</text>
</comment>
<comment type="subunit">
    <text evidence="1">Interacts with RssB.</text>
</comment>
<comment type="subcellular location">
    <subcellularLocation>
        <location evidence="1">Cytoplasm</location>
    </subcellularLocation>
</comment>
<comment type="similarity">
    <text evidence="1">Belongs to the GpW/Gp25 family. IraD subfamily.</text>
</comment>
<name>IRAD_ECOSM</name>
<gene>
    <name evidence="1" type="primary">iraD</name>
    <name type="ordered locus">EcSMS35_4855</name>
</gene>